<reference key="1">
    <citation type="submission" date="2006-12" db="EMBL/GenBank/DDBJ databases">
        <title>Bifidobacterium adolescentis complete genome sequence.</title>
        <authorList>
            <person name="Suzuki T."/>
            <person name="Tsuda Y."/>
            <person name="Kanou N."/>
            <person name="Inoue T."/>
            <person name="Kumazaki K."/>
            <person name="Nagano S."/>
            <person name="Hirai S."/>
            <person name="Tanaka K."/>
            <person name="Watanabe K."/>
        </authorList>
    </citation>
    <scope>NUCLEOTIDE SEQUENCE [LARGE SCALE GENOMIC DNA]</scope>
    <source>
        <strain>ATCC 15703 / DSM 20083 / NCTC 11814 / E194a</strain>
    </source>
</reference>
<name>HIS8_BIFAA</name>
<feature type="chain" id="PRO_0000319744" description="Histidinol-phosphate aminotransferase">
    <location>
        <begin position="1"/>
        <end position="391"/>
    </location>
</feature>
<feature type="modified residue" description="N6-(pyridoxal phosphate)lysine" evidence="1">
    <location>
        <position position="245"/>
    </location>
</feature>
<protein>
    <recommendedName>
        <fullName evidence="1">Histidinol-phosphate aminotransferase</fullName>
        <ecNumber evidence="1">2.6.1.9</ecNumber>
    </recommendedName>
    <alternativeName>
        <fullName evidence="1">Imidazole acetol-phosphate transaminase</fullName>
    </alternativeName>
</protein>
<evidence type="ECO:0000255" key="1">
    <source>
        <dbReference type="HAMAP-Rule" id="MF_01023"/>
    </source>
</evidence>
<sequence length="391" mass="43352">MSETSSNAIPAYLPLRNDLIGEEPYGAPQLDVPVCLNVNENPYAPEPAVVETIAQRVKEIAPTLNRYPDREHIELRKAFSTYLERESGVKLSVDQLWGANGSNEIMLQLFQAFGGPGRIALGCDPTYSMYPEYARDTFTTWKLAHRNADFTLDVDATIKAIEDVKPAMIVLTSPNNPTGTPLKPEDLKRVLEAARTAEVAGAAEGVHPVVVVDEAYIEFRDPGTPTALELIGEYENLAVSRTMSKAFAFAGARVGYLAANKGIIDCVRIVRMPYHLSAVTQAAALAAFEHTDEQLSRVAHLRETRNATSAWLKEQTYKGQPLEVAETQSNFILFGGHFDDRDRIFDELLKRGVLIRVVGPEGWMRVCMGTDEEMARFREALVEVLRIVEQG</sequence>
<proteinExistence type="inferred from homology"/>
<keyword id="KW-0028">Amino-acid biosynthesis</keyword>
<keyword id="KW-0032">Aminotransferase</keyword>
<keyword id="KW-0368">Histidine biosynthesis</keyword>
<keyword id="KW-0663">Pyridoxal phosphate</keyword>
<keyword id="KW-1185">Reference proteome</keyword>
<keyword id="KW-0808">Transferase</keyword>
<dbReference type="EC" id="2.6.1.9" evidence="1"/>
<dbReference type="EMBL" id="AP009256">
    <property type="protein sequence ID" value="BAF39909.1"/>
    <property type="molecule type" value="Genomic_DNA"/>
</dbReference>
<dbReference type="RefSeq" id="WP_011743464.1">
    <property type="nucleotide sequence ID" value="NC_008618.1"/>
</dbReference>
<dbReference type="SMR" id="A1A2H6"/>
<dbReference type="STRING" id="367928.BAD_1128"/>
<dbReference type="PaxDb" id="1680-BADO_1186"/>
<dbReference type="GeneID" id="4556152"/>
<dbReference type="KEGG" id="bad:BAD_1128"/>
<dbReference type="HOGENOM" id="CLU_017584_3_1_11"/>
<dbReference type="UniPathway" id="UPA00031">
    <property type="reaction ID" value="UER00012"/>
</dbReference>
<dbReference type="Proteomes" id="UP000008702">
    <property type="component" value="Chromosome"/>
</dbReference>
<dbReference type="GO" id="GO:0004400">
    <property type="term" value="F:histidinol-phosphate transaminase activity"/>
    <property type="evidence" value="ECO:0007669"/>
    <property type="project" value="UniProtKB-UniRule"/>
</dbReference>
<dbReference type="GO" id="GO:0030170">
    <property type="term" value="F:pyridoxal phosphate binding"/>
    <property type="evidence" value="ECO:0007669"/>
    <property type="project" value="InterPro"/>
</dbReference>
<dbReference type="GO" id="GO:0000105">
    <property type="term" value="P:L-histidine biosynthetic process"/>
    <property type="evidence" value="ECO:0007669"/>
    <property type="project" value="UniProtKB-UniRule"/>
</dbReference>
<dbReference type="CDD" id="cd00609">
    <property type="entry name" value="AAT_like"/>
    <property type="match status" value="1"/>
</dbReference>
<dbReference type="Gene3D" id="3.90.1150.10">
    <property type="entry name" value="Aspartate Aminotransferase, domain 1"/>
    <property type="match status" value="1"/>
</dbReference>
<dbReference type="Gene3D" id="3.40.640.10">
    <property type="entry name" value="Type I PLP-dependent aspartate aminotransferase-like (Major domain)"/>
    <property type="match status" value="1"/>
</dbReference>
<dbReference type="HAMAP" id="MF_01023">
    <property type="entry name" value="HisC_aminotrans_2"/>
    <property type="match status" value="1"/>
</dbReference>
<dbReference type="InterPro" id="IPR001917">
    <property type="entry name" value="Aminotrans_II_pyridoxalP_BS"/>
</dbReference>
<dbReference type="InterPro" id="IPR004839">
    <property type="entry name" value="Aminotransferase_I/II_large"/>
</dbReference>
<dbReference type="InterPro" id="IPR005861">
    <property type="entry name" value="HisP_aminotrans"/>
</dbReference>
<dbReference type="InterPro" id="IPR015424">
    <property type="entry name" value="PyrdxlP-dep_Trfase"/>
</dbReference>
<dbReference type="InterPro" id="IPR015421">
    <property type="entry name" value="PyrdxlP-dep_Trfase_major"/>
</dbReference>
<dbReference type="InterPro" id="IPR015422">
    <property type="entry name" value="PyrdxlP-dep_Trfase_small"/>
</dbReference>
<dbReference type="NCBIfam" id="NF002877">
    <property type="entry name" value="PRK03317.1"/>
    <property type="match status" value="1"/>
</dbReference>
<dbReference type="PANTHER" id="PTHR42885:SF2">
    <property type="entry name" value="HISTIDINOL-PHOSPHATE AMINOTRANSFERASE"/>
    <property type="match status" value="1"/>
</dbReference>
<dbReference type="PANTHER" id="PTHR42885">
    <property type="entry name" value="HISTIDINOL-PHOSPHATE AMINOTRANSFERASE-RELATED"/>
    <property type="match status" value="1"/>
</dbReference>
<dbReference type="Pfam" id="PF00155">
    <property type="entry name" value="Aminotran_1_2"/>
    <property type="match status" value="1"/>
</dbReference>
<dbReference type="SUPFAM" id="SSF53383">
    <property type="entry name" value="PLP-dependent transferases"/>
    <property type="match status" value="1"/>
</dbReference>
<dbReference type="PROSITE" id="PS00599">
    <property type="entry name" value="AA_TRANSFER_CLASS_2"/>
    <property type="match status" value="1"/>
</dbReference>
<accession>A1A2H6</accession>
<comment type="catalytic activity">
    <reaction evidence="1">
        <text>L-histidinol phosphate + 2-oxoglutarate = 3-(imidazol-4-yl)-2-oxopropyl phosphate + L-glutamate</text>
        <dbReference type="Rhea" id="RHEA:23744"/>
        <dbReference type="ChEBI" id="CHEBI:16810"/>
        <dbReference type="ChEBI" id="CHEBI:29985"/>
        <dbReference type="ChEBI" id="CHEBI:57766"/>
        <dbReference type="ChEBI" id="CHEBI:57980"/>
        <dbReference type="EC" id="2.6.1.9"/>
    </reaction>
</comment>
<comment type="cofactor">
    <cofactor evidence="1">
        <name>pyridoxal 5'-phosphate</name>
        <dbReference type="ChEBI" id="CHEBI:597326"/>
    </cofactor>
</comment>
<comment type="pathway">
    <text evidence="1">Amino-acid biosynthesis; L-histidine biosynthesis; L-histidine from 5-phospho-alpha-D-ribose 1-diphosphate: step 7/9.</text>
</comment>
<comment type="subunit">
    <text evidence="1">Homodimer.</text>
</comment>
<comment type="similarity">
    <text evidence="1">Belongs to the class-II pyridoxal-phosphate-dependent aminotransferase family. Histidinol-phosphate aminotransferase subfamily.</text>
</comment>
<gene>
    <name evidence="1" type="primary">hisC</name>
    <name type="ordered locus">BAD_1128</name>
</gene>
<organism>
    <name type="scientific">Bifidobacterium adolescentis (strain ATCC 15703 / DSM 20083 / NCTC 11814 / E194a)</name>
    <dbReference type="NCBI Taxonomy" id="367928"/>
    <lineage>
        <taxon>Bacteria</taxon>
        <taxon>Bacillati</taxon>
        <taxon>Actinomycetota</taxon>
        <taxon>Actinomycetes</taxon>
        <taxon>Bifidobacteriales</taxon>
        <taxon>Bifidobacteriaceae</taxon>
        <taxon>Bifidobacterium</taxon>
    </lineage>
</organism>